<accession>Q2NFZ6</accession>
<reference key="1">
    <citation type="journal article" date="2006" name="J. Bacteriol.">
        <title>The genome sequence of Methanosphaera stadtmanae reveals why this human intestinal archaeon is restricted to methanol and H2 for methane formation and ATP synthesis.</title>
        <authorList>
            <person name="Fricke W.F."/>
            <person name="Seedorf H."/>
            <person name="Henne A."/>
            <person name="Kruer M."/>
            <person name="Liesegang H."/>
            <person name="Hedderich R."/>
            <person name="Gottschalk G."/>
            <person name="Thauer R.K."/>
        </authorList>
    </citation>
    <scope>NUCLEOTIDE SEQUENCE [LARGE SCALE GENOMIC DNA]</scope>
    <source>
        <strain>ATCC 43021 / DSM 3091 / JCM 11832 / MCB-3</strain>
    </source>
</reference>
<comment type="function">
    <text evidence="1">DNA-dependent RNA polymerase (RNAP) catalyzes the transcription of DNA into RNA using the four ribonucleoside triphosphates as substrates.</text>
</comment>
<comment type="catalytic activity">
    <reaction evidence="1">
        <text>RNA(n) + a ribonucleoside 5'-triphosphate = RNA(n+1) + diphosphate</text>
        <dbReference type="Rhea" id="RHEA:21248"/>
        <dbReference type="Rhea" id="RHEA-COMP:14527"/>
        <dbReference type="Rhea" id="RHEA-COMP:17342"/>
        <dbReference type="ChEBI" id="CHEBI:33019"/>
        <dbReference type="ChEBI" id="CHEBI:61557"/>
        <dbReference type="ChEBI" id="CHEBI:140395"/>
        <dbReference type="EC" id="2.7.7.6"/>
    </reaction>
</comment>
<comment type="cofactor">
    <cofactor evidence="1">
        <name>[3Fe-4S] cluster</name>
        <dbReference type="ChEBI" id="CHEBI:21137"/>
    </cofactor>
    <text evidence="1">Binds 1 [3Fe-4S] cluster.</text>
</comment>
<comment type="subunit">
    <text evidence="1">Part of the RNA polymerase complex.</text>
</comment>
<comment type="subcellular location">
    <subcellularLocation>
        <location evidence="1">Cytoplasm</location>
    </subcellularLocation>
</comment>
<comment type="similarity">
    <text evidence="1">Belongs to the archaeal Rpo3/eukaryotic RPB3 RNA polymerase subunit family.</text>
</comment>
<comment type="caution">
    <text evidence="2">X-ray crystallography in other archaea shows this protein binds a 3Fe-4S cluster, although a 4Fe-4S cluster has been suggested to be present in this protein.</text>
</comment>
<protein>
    <recommendedName>
        <fullName evidence="1">DNA-directed RNA polymerase subunit Rpo3</fullName>
        <ecNumber evidence="1">2.7.7.6</ecNumber>
    </recommendedName>
    <alternativeName>
        <fullName evidence="1">DNA-directed RNA polymerase subunit D</fullName>
    </alternativeName>
</protein>
<organism>
    <name type="scientific">Methanosphaera stadtmanae (strain ATCC 43021 / DSM 3091 / JCM 11832 / MCB-3)</name>
    <dbReference type="NCBI Taxonomy" id="339860"/>
    <lineage>
        <taxon>Archaea</taxon>
        <taxon>Methanobacteriati</taxon>
        <taxon>Methanobacteriota</taxon>
        <taxon>Methanomada group</taxon>
        <taxon>Methanobacteria</taxon>
        <taxon>Methanobacteriales</taxon>
        <taxon>Methanobacteriaceae</taxon>
        <taxon>Methanosphaera</taxon>
    </lineage>
</organism>
<feature type="chain" id="PRO_1000005788" description="DNA-directed RNA polymerase subunit Rpo3">
    <location>
        <begin position="1"/>
        <end position="270"/>
    </location>
</feature>
<feature type="binding site" evidence="1">
    <location>
        <position position="206"/>
    </location>
    <ligand>
        <name>[3Fe-4S] cluster</name>
        <dbReference type="ChEBI" id="CHEBI:21137"/>
    </ligand>
</feature>
<feature type="binding site" evidence="1">
    <location>
        <position position="209"/>
    </location>
    <ligand>
        <name>[3Fe-4S] cluster</name>
        <dbReference type="ChEBI" id="CHEBI:21137"/>
    </ligand>
</feature>
<feature type="binding site" evidence="1">
    <location>
        <position position="212"/>
    </location>
    <ligand>
        <name>[3Fe-4S] cluster</name>
        <dbReference type="ChEBI" id="CHEBI:21137"/>
    </ligand>
</feature>
<name>RPO3_METST</name>
<proteinExistence type="inferred from homology"/>
<dbReference type="EC" id="2.7.7.6" evidence="1"/>
<dbReference type="EMBL" id="CP000102">
    <property type="protein sequence ID" value="ABC57257.1"/>
    <property type="molecule type" value="Genomic_DNA"/>
</dbReference>
<dbReference type="RefSeq" id="WP_011406456.1">
    <property type="nucleotide sequence ID" value="NC_007681.1"/>
</dbReference>
<dbReference type="SMR" id="Q2NFZ6"/>
<dbReference type="STRING" id="339860.Msp_0868"/>
<dbReference type="KEGG" id="mst:Msp_0868"/>
<dbReference type="eggNOG" id="arCOG04241">
    <property type="taxonomic scope" value="Archaea"/>
</dbReference>
<dbReference type="HOGENOM" id="CLU_038421_3_1_2"/>
<dbReference type="OrthoDB" id="84933at2157"/>
<dbReference type="Proteomes" id="UP000001931">
    <property type="component" value="Chromosome"/>
</dbReference>
<dbReference type="GO" id="GO:0005737">
    <property type="term" value="C:cytoplasm"/>
    <property type="evidence" value="ECO:0007669"/>
    <property type="project" value="UniProtKB-SubCell"/>
</dbReference>
<dbReference type="GO" id="GO:0000428">
    <property type="term" value="C:DNA-directed RNA polymerase complex"/>
    <property type="evidence" value="ECO:0007669"/>
    <property type="project" value="UniProtKB-KW"/>
</dbReference>
<dbReference type="GO" id="GO:0051538">
    <property type="term" value="F:3 iron, 4 sulfur cluster binding"/>
    <property type="evidence" value="ECO:0007669"/>
    <property type="project" value="UniProtKB-KW"/>
</dbReference>
<dbReference type="GO" id="GO:0003677">
    <property type="term" value="F:DNA binding"/>
    <property type="evidence" value="ECO:0007669"/>
    <property type="project" value="UniProtKB-UniRule"/>
</dbReference>
<dbReference type="GO" id="GO:0003899">
    <property type="term" value="F:DNA-directed RNA polymerase activity"/>
    <property type="evidence" value="ECO:0007669"/>
    <property type="project" value="UniProtKB-UniRule"/>
</dbReference>
<dbReference type="GO" id="GO:0046872">
    <property type="term" value="F:metal ion binding"/>
    <property type="evidence" value="ECO:0007669"/>
    <property type="project" value="UniProtKB-KW"/>
</dbReference>
<dbReference type="GO" id="GO:0046983">
    <property type="term" value="F:protein dimerization activity"/>
    <property type="evidence" value="ECO:0007669"/>
    <property type="project" value="InterPro"/>
</dbReference>
<dbReference type="GO" id="GO:0006351">
    <property type="term" value="P:DNA-templated transcription"/>
    <property type="evidence" value="ECO:0007669"/>
    <property type="project" value="UniProtKB-UniRule"/>
</dbReference>
<dbReference type="CDD" id="cd07030">
    <property type="entry name" value="RNAP_D"/>
    <property type="match status" value="1"/>
</dbReference>
<dbReference type="Gene3D" id="3.30.70.3110">
    <property type="match status" value="1"/>
</dbReference>
<dbReference type="Gene3D" id="2.170.120.12">
    <property type="entry name" value="DNA-directed RNA polymerase, insert domain"/>
    <property type="match status" value="1"/>
</dbReference>
<dbReference type="Gene3D" id="3.30.1360.10">
    <property type="entry name" value="RNA polymerase, RBP11-like subunit"/>
    <property type="match status" value="1"/>
</dbReference>
<dbReference type="HAMAP" id="MF_00320">
    <property type="entry name" value="RNApol_arch_Rpo3"/>
    <property type="match status" value="1"/>
</dbReference>
<dbReference type="InterPro" id="IPR001514">
    <property type="entry name" value="DNA-dir_RNA_pol_30-40kDasu_CS"/>
</dbReference>
<dbReference type="InterPro" id="IPR011262">
    <property type="entry name" value="DNA-dir_RNA_pol_insert"/>
</dbReference>
<dbReference type="InterPro" id="IPR011263">
    <property type="entry name" value="DNA-dir_RNA_pol_RpoA/D/Rpb3"/>
</dbReference>
<dbReference type="InterPro" id="IPR036603">
    <property type="entry name" value="RBP11-like"/>
</dbReference>
<dbReference type="InterPro" id="IPR022842">
    <property type="entry name" value="RNAP_Rpo3/Rpb3/RPAC1"/>
</dbReference>
<dbReference type="InterPro" id="IPR036643">
    <property type="entry name" value="RNApol_insert_sf"/>
</dbReference>
<dbReference type="InterPro" id="IPR050518">
    <property type="entry name" value="Rpo3/RPB3_RNA_Pol_subunit"/>
</dbReference>
<dbReference type="NCBIfam" id="NF001988">
    <property type="entry name" value="PRK00783.1"/>
    <property type="match status" value="1"/>
</dbReference>
<dbReference type="PANTHER" id="PTHR11800">
    <property type="entry name" value="DNA-DIRECTED RNA POLYMERASE"/>
    <property type="match status" value="1"/>
</dbReference>
<dbReference type="PANTHER" id="PTHR11800:SF2">
    <property type="entry name" value="DNA-DIRECTED RNA POLYMERASE II SUBUNIT RPB3"/>
    <property type="match status" value="1"/>
</dbReference>
<dbReference type="Pfam" id="PF01000">
    <property type="entry name" value="RNA_pol_A_bac"/>
    <property type="match status" value="1"/>
</dbReference>
<dbReference type="Pfam" id="PF01193">
    <property type="entry name" value="RNA_pol_L"/>
    <property type="match status" value="1"/>
</dbReference>
<dbReference type="SMART" id="SM00662">
    <property type="entry name" value="RPOLD"/>
    <property type="match status" value="1"/>
</dbReference>
<dbReference type="SUPFAM" id="SSF56553">
    <property type="entry name" value="Insert subdomain of RNA polymerase alpha subunit"/>
    <property type="match status" value="1"/>
</dbReference>
<dbReference type="SUPFAM" id="SSF55257">
    <property type="entry name" value="RBP11-like subunits of RNA polymerase"/>
    <property type="match status" value="1"/>
</dbReference>
<dbReference type="PROSITE" id="PS00446">
    <property type="entry name" value="RNA_POL_D_30KD"/>
    <property type="match status" value="1"/>
</dbReference>
<keyword id="KW-0003">3Fe-4S</keyword>
<keyword id="KW-0963">Cytoplasm</keyword>
<keyword id="KW-0240">DNA-directed RNA polymerase</keyword>
<keyword id="KW-0408">Iron</keyword>
<keyword id="KW-0411">Iron-sulfur</keyword>
<keyword id="KW-0479">Metal-binding</keyword>
<keyword id="KW-0548">Nucleotidyltransferase</keyword>
<keyword id="KW-1185">Reference proteome</keyword>
<keyword id="KW-0804">Transcription</keyword>
<keyword id="KW-0808">Transferase</keyword>
<evidence type="ECO:0000255" key="1">
    <source>
        <dbReference type="HAMAP-Rule" id="MF_00320"/>
    </source>
</evidence>
<evidence type="ECO:0000305" key="2"/>
<gene>
    <name evidence="1" type="primary">rpo3</name>
    <name evidence="1" type="synonym">rpoD</name>
    <name type="ordered locus">Msp_0868</name>
</gene>
<sequence length="270" mass="30742">MNIEIREKDDERAVFVVEGVDDTFINTIRRICLVEIPTLAIEDVNIYKNDAKMFDEVLAHRLGLIPIVTDLDSYVMPSECDCESGCQHCRVSFLLKEKCEEGNDSKIVYSKDLKSDDPAVKPVYDTIPIVRLREGEEVELEAIAELGLGSEHAKWQATTTCGYKYYPKIEIDTEKVNDLEEYVEECPRNVLQIEDDTLVVGNIENCSTCRTCQRLSEKDDNAIVVDFEESKYIFKIETDGSLKPFDVLTIACDILSEKADNIINFVNEEE</sequence>